<keyword id="KW-0507">mRNA processing</keyword>
<keyword id="KW-0508">mRNA splicing</keyword>
<keyword id="KW-0539">Nucleus</keyword>
<keyword id="KW-1185">Reference proteome</keyword>
<keyword id="KW-0747">Spliceosome</keyword>
<dbReference type="EMBL" id="CR382126">
    <property type="protein sequence ID" value="CAG97899.1"/>
    <property type="molecule type" value="Genomic_DNA"/>
</dbReference>
<dbReference type="RefSeq" id="XP_455192.1">
    <property type="nucleotide sequence ID" value="XM_455192.1"/>
</dbReference>
<dbReference type="FunCoup" id="Q6CLJ7">
    <property type="interactions" value="1052"/>
</dbReference>
<dbReference type="STRING" id="284590.Q6CLJ7"/>
<dbReference type="PaxDb" id="284590-Q6CLJ7"/>
<dbReference type="KEGG" id="kla:KLLA0_F02475g"/>
<dbReference type="eggNOG" id="KOG2441">
    <property type="taxonomic scope" value="Eukaryota"/>
</dbReference>
<dbReference type="HOGENOM" id="CLU_006601_3_1_1"/>
<dbReference type="InParanoid" id="Q6CLJ7"/>
<dbReference type="OMA" id="EDQVYDN"/>
<dbReference type="Proteomes" id="UP000000598">
    <property type="component" value="Chromosome F"/>
</dbReference>
<dbReference type="GO" id="GO:0005681">
    <property type="term" value="C:spliceosomal complex"/>
    <property type="evidence" value="ECO:0007669"/>
    <property type="project" value="UniProtKB-KW"/>
</dbReference>
<dbReference type="GO" id="GO:0000398">
    <property type="term" value="P:mRNA splicing, via spliceosome"/>
    <property type="evidence" value="ECO:0007669"/>
    <property type="project" value="InterPro"/>
</dbReference>
<dbReference type="InterPro" id="IPR017862">
    <property type="entry name" value="SKI-int_prot_SKIP"/>
</dbReference>
<dbReference type="InterPro" id="IPR004015">
    <property type="entry name" value="SKI-int_prot_SKIP_SNW-dom"/>
</dbReference>
<dbReference type="PANTHER" id="PTHR12096">
    <property type="entry name" value="NUCLEAR PROTEIN SKIP-RELATED"/>
    <property type="match status" value="1"/>
</dbReference>
<dbReference type="Pfam" id="PF02731">
    <property type="entry name" value="SKIP_SNW"/>
    <property type="match status" value="1"/>
</dbReference>
<feature type="chain" id="PRO_0000084821" description="Pre-mRNA-processing protein 45">
    <location>
        <begin position="1"/>
        <end position="430"/>
    </location>
</feature>
<feature type="region of interest" description="Disordered" evidence="2">
    <location>
        <begin position="1"/>
        <end position="28"/>
    </location>
</feature>
<feature type="region of interest" description="Disordered" evidence="2">
    <location>
        <begin position="280"/>
        <end position="299"/>
    </location>
</feature>
<feature type="region of interest" description="Disordered" evidence="2">
    <location>
        <begin position="370"/>
        <end position="430"/>
    </location>
</feature>
<feature type="compositionally biased region" description="Polar residues" evidence="2">
    <location>
        <begin position="1"/>
        <end position="26"/>
    </location>
</feature>
<evidence type="ECO:0000250" key="1"/>
<evidence type="ECO:0000256" key="2">
    <source>
        <dbReference type="SAM" id="MobiDB-lite"/>
    </source>
</evidence>
<evidence type="ECO:0000305" key="3"/>
<proteinExistence type="inferred from homology"/>
<gene>
    <name type="primary">PRP45</name>
    <name type="ordered locus">KLLA0F02475g</name>
</gene>
<reference key="1">
    <citation type="journal article" date="2004" name="Nature">
        <title>Genome evolution in yeasts.</title>
        <authorList>
            <person name="Dujon B."/>
            <person name="Sherman D."/>
            <person name="Fischer G."/>
            <person name="Durrens P."/>
            <person name="Casaregola S."/>
            <person name="Lafontaine I."/>
            <person name="de Montigny J."/>
            <person name="Marck C."/>
            <person name="Neuveglise C."/>
            <person name="Talla E."/>
            <person name="Goffard N."/>
            <person name="Frangeul L."/>
            <person name="Aigle M."/>
            <person name="Anthouard V."/>
            <person name="Babour A."/>
            <person name="Barbe V."/>
            <person name="Barnay S."/>
            <person name="Blanchin S."/>
            <person name="Beckerich J.-M."/>
            <person name="Beyne E."/>
            <person name="Bleykasten C."/>
            <person name="Boisrame A."/>
            <person name="Boyer J."/>
            <person name="Cattolico L."/>
            <person name="Confanioleri F."/>
            <person name="de Daruvar A."/>
            <person name="Despons L."/>
            <person name="Fabre E."/>
            <person name="Fairhead C."/>
            <person name="Ferry-Dumazet H."/>
            <person name="Groppi A."/>
            <person name="Hantraye F."/>
            <person name="Hennequin C."/>
            <person name="Jauniaux N."/>
            <person name="Joyet P."/>
            <person name="Kachouri R."/>
            <person name="Kerrest A."/>
            <person name="Koszul R."/>
            <person name="Lemaire M."/>
            <person name="Lesur I."/>
            <person name="Ma L."/>
            <person name="Muller H."/>
            <person name="Nicaud J.-M."/>
            <person name="Nikolski M."/>
            <person name="Oztas S."/>
            <person name="Ozier-Kalogeropoulos O."/>
            <person name="Pellenz S."/>
            <person name="Potier S."/>
            <person name="Richard G.-F."/>
            <person name="Straub M.-L."/>
            <person name="Suleau A."/>
            <person name="Swennen D."/>
            <person name="Tekaia F."/>
            <person name="Wesolowski-Louvel M."/>
            <person name="Westhof E."/>
            <person name="Wirth B."/>
            <person name="Zeniou-Meyer M."/>
            <person name="Zivanovic Y."/>
            <person name="Bolotin-Fukuhara M."/>
            <person name="Thierry A."/>
            <person name="Bouchier C."/>
            <person name="Caudron B."/>
            <person name="Scarpelli C."/>
            <person name="Gaillardin C."/>
            <person name="Weissenbach J."/>
            <person name="Wincker P."/>
            <person name="Souciet J.-L."/>
        </authorList>
    </citation>
    <scope>NUCLEOTIDE SEQUENCE [LARGE SCALE GENOMIC DNA]</scope>
    <source>
        <strain>ATCC 8585 / CBS 2359 / DSM 70799 / NBRC 1267 / NRRL Y-1140 / WM37</strain>
    </source>
</reference>
<protein>
    <recommendedName>
        <fullName>Pre-mRNA-processing protein 45</fullName>
    </recommendedName>
</protein>
<comment type="function">
    <text evidence="1">Involved in pre-mRNA splicing.</text>
</comment>
<comment type="subunit">
    <text evidence="1">Associated with the spliceosome.</text>
</comment>
<comment type="subcellular location">
    <subcellularLocation>
        <location evidence="1">Nucleus</location>
    </subcellularLocation>
</comment>
<comment type="similarity">
    <text evidence="3">Belongs to the SNW family.</text>
</comment>
<organism>
    <name type="scientific">Kluyveromyces lactis (strain ATCC 8585 / CBS 2359 / DSM 70799 / NBRC 1267 / NRRL Y-1140 / WM37)</name>
    <name type="common">Yeast</name>
    <name type="synonym">Candida sphaerica</name>
    <dbReference type="NCBI Taxonomy" id="284590"/>
    <lineage>
        <taxon>Eukaryota</taxon>
        <taxon>Fungi</taxon>
        <taxon>Dikarya</taxon>
        <taxon>Ascomycota</taxon>
        <taxon>Saccharomycotina</taxon>
        <taxon>Saccharomycetes</taxon>
        <taxon>Saccharomycetales</taxon>
        <taxon>Saccharomycetaceae</taxon>
        <taxon>Kluyveromyces</taxon>
    </lineage>
</organism>
<name>PRP45_KLULA</name>
<accession>Q6CLJ7</accession>
<sequence length="430" mass="49358">MSFRTLSSLLPSPQNSEVSESSAFSRQSKENIKDTIILDKLRPENLPVASISDFVPLRQRDISLEAPFPSTSQINQTYVKTKAFLDSLLTKKSSLQLSSIANKDIVKREAISSVKSGTQRSVKVIEHKKDPLQPVTHRKRKVVVPSEEIQAPILHKSDDPSIKPTKEELDKWRIPSAISNWKNPNGFAISLDNRVAIESIKTDCPDNDKKDNFLLLSEALDEAEREARQRINIKQEAYKELEKEETLKKEQRLRHLAERARQDRENRRQYENEDHYVREMERNQRRRAERELERSNKMSTAEKLRRLAYQQGRDVSDKVVLNAAKATETPDLQYDSRLFKKAASSVASSSNQIFDHPLFNNSQIDNIYRPTTGSNLENEDIVDRLSNKKGRTGPVEFSAADDGKNAEQNEEDNEHAREYGLQVRKKPHTS</sequence>